<gene>
    <name type="primary">cefD1</name>
</gene>
<comment type="function">
    <text evidence="3">Together with cefD2, catalyzes the reversible isomerization between isopenicillin N and penicillin N. This two-component IPN epimerase system may function by two sequential steps, an activation of isopenicillin N by the acyl-CoA synthase component cefD1, followed by epimerization by the acyl-CoA racemase component cefD2.</text>
</comment>
<comment type="catalytic activity">
    <reaction>
        <text>isopenicillin N = penicillin N</text>
        <dbReference type="Rhea" id="RHEA:20033"/>
        <dbReference type="ChEBI" id="CHEBI:58399"/>
        <dbReference type="ChEBI" id="CHEBI:58408"/>
        <dbReference type="EC" id="5.1.1.17"/>
    </reaction>
</comment>
<comment type="pathway">
    <text>Antibiotic biosynthesis; cephalosporin C biosynthesis.</text>
</comment>
<comment type="similarity">
    <text evidence="4">Belongs to the ATP-dependent AMP-binding enzyme family.</text>
</comment>
<reference key="1">
    <citation type="journal article" date="2002" name="J. Biol. Chem.">
        <title>A novel epimerization system in fungal secondary metabolism involved in the conversion of isopenicillin N into penicillin N in Acremonium chrysogenum.</title>
        <authorList>
            <person name="Ullan R.V."/>
            <person name="Casqueiro J."/>
            <person name="Banuelos O."/>
            <person name="Fernandez F.J."/>
            <person name="Gutierrez S."/>
            <person name="Martin J.F."/>
        </authorList>
    </citation>
    <scope>NUCLEOTIDE SEQUENCE [GENOMIC DNA]</scope>
    <scope>FUNCTION</scope>
    <source>
        <strain>ATCC 48278 / C10</strain>
    </source>
</reference>
<sequence length="609" mass="67197">MAPGGLLTLAGAAAASTAAAAYLDAKLHLTKDLNQLARAERGAQNFARAVEQRKASGFFLFEAAAARLGDAPCIWSRGHPEYSWTQTYQRACQYGHYFRDLGVVAGQHVGVYLYNSPELMFIWMGLLSIGAAPALINYNLGSDALVHCVRLSRSRFLIYDDASDCSSRIHEVGERLRDINVEAIMLSGSGTTGLPKAAPITVARNYPSASLLPKTFGQKPGPNGDRTYYCIPLYHGTGGIAAMNDLMSGISIALAPKFSLSRFWDDCIESGSTIFVYVGELIRYLLSAPASPKDRQHRVRLVWGNGLSPELWTKFQDRFGVSDIGEFYASTEGVLTLLKHYRGGGFGLGAVGHHGWLLRRKFHNDYVPVRIDPETGDIWRSPKTGFAERLPYERGGEILARLPSRSAWAGYWHAEEATQKKLVENVFEKGDLYFRTGDALRRDADGHWYFLDRLGDTYRWKGENVSTTEVGQVLGSHADIAEANVYGVQVPNHDGRAGCAAIALKNAATPDTLDWSRLTSLLRSELPSYAVPVFIRVRETVGGMSTDNHKHNKVPLRDEGVDPRSMGSKVPGSEKDRFFWLPAGASKYVPFTERDWDLLSGQSAARPRL</sequence>
<evidence type="ECO:0000255" key="1"/>
<evidence type="ECO:0000256" key="2">
    <source>
        <dbReference type="SAM" id="MobiDB-lite"/>
    </source>
</evidence>
<evidence type="ECO:0000269" key="3">
    <source>
    </source>
</evidence>
<evidence type="ECO:0000305" key="4"/>
<proteinExistence type="inferred from homology"/>
<name>CEFD1_HAPCH</name>
<organism>
    <name type="scientific">Hapsidospora chrysogena</name>
    <name type="common">Acremonium chrysogenum</name>
    <dbReference type="NCBI Taxonomy" id="5044"/>
    <lineage>
        <taxon>Eukaryota</taxon>
        <taxon>Fungi</taxon>
        <taxon>Dikarya</taxon>
        <taxon>Ascomycota</taxon>
        <taxon>Pezizomycotina</taxon>
        <taxon>Sordariomycetes</taxon>
        <taxon>Hypocreomycetidae</taxon>
        <taxon>Hypocreales</taxon>
        <taxon>Bionectriaceae</taxon>
        <taxon>Hapsidospora</taxon>
    </lineage>
</organism>
<dbReference type="EC" id="5.1.1.17"/>
<dbReference type="EC" id="6.2.1.-"/>
<dbReference type="EMBL" id="AJ507632">
    <property type="protein sequence ID" value="CAD45625.1"/>
    <property type="molecule type" value="Genomic_DNA"/>
</dbReference>
<dbReference type="SMR" id="Q8J0E9"/>
<dbReference type="UniPathway" id="UPA00172"/>
<dbReference type="GO" id="GO:0009898">
    <property type="term" value="C:cytoplasmic side of plasma membrane"/>
    <property type="evidence" value="ECO:0007669"/>
    <property type="project" value="TreeGrafter"/>
</dbReference>
<dbReference type="GO" id="GO:0005811">
    <property type="term" value="C:lipid droplet"/>
    <property type="evidence" value="ECO:0007669"/>
    <property type="project" value="TreeGrafter"/>
</dbReference>
<dbReference type="GO" id="GO:0005777">
    <property type="term" value="C:peroxisome"/>
    <property type="evidence" value="ECO:0007669"/>
    <property type="project" value="TreeGrafter"/>
</dbReference>
<dbReference type="GO" id="GO:0045439">
    <property type="term" value="F:isopenicillin-N epimerase activity"/>
    <property type="evidence" value="ECO:0000315"/>
    <property type="project" value="UniProtKB"/>
</dbReference>
<dbReference type="GO" id="GO:0005324">
    <property type="term" value="F:long-chain fatty acid transmembrane transporter activity"/>
    <property type="evidence" value="ECO:0007669"/>
    <property type="project" value="TreeGrafter"/>
</dbReference>
<dbReference type="GO" id="GO:0004467">
    <property type="term" value="F:long-chain fatty acid-CoA ligase activity"/>
    <property type="evidence" value="ECO:0007669"/>
    <property type="project" value="TreeGrafter"/>
</dbReference>
<dbReference type="GO" id="GO:0044539">
    <property type="term" value="P:long-chain fatty acid import into cell"/>
    <property type="evidence" value="ECO:0007669"/>
    <property type="project" value="TreeGrafter"/>
</dbReference>
<dbReference type="GO" id="GO:0042318">
    <property type="term" value="P:penicillin biosynthetic process"/>
    <property type="evidence" value="ECO:0000315"/>
    <property type="project" value="UniProtKB"/>
</dbReference>
<dbReference type="CDD" id="cd05937">
    <property type="entry name" value="FATP_chFAT1_like"/>
    <property type="match status" value="1"/>
</dbReference>
<dbReference type="FunFam" id="3.30.300.30:FF:000002">
    <property type="entry name" value="Long-chain fatty acid transport protein 1"/>
    <property type="match status" value="1"/>
</dbReference>
<dbReference type="Gene3D" id="3.30.300.30">
    <property type="match status" value="1"/>
</dbReference>
<dbReference type="Gene3D" id="3.40.50.12780">
    <property type="entry name" value="N-terminal domain of ligase-like"/>
    <property type="match status" value="1"/>
</dbReference>
<dbReference type="InterPro" id="IPR025110">
    <property type="entry name" value="AMP-bd_C"/>
</dbReference>
<dbReference type="InterPro" id="IPR045851">
    <property type="entry name" value="AMP-bd_C_sf"/>
</dbReference>
<dbReference type="InterPro" id="IPR000873">
    <property type="entry name" value="AMP-dep_synth/lig_dom"/>
</dbReference>
<dbReference type="InterPro" id="IPR042099">
    <property type="entry name" value="ANL_N_sf"/>
</dbReference>
<dbReference type="PANTHER" id="PTHR43107:SF6">
    <property type="entry name" value="ACYL-COA SYNTHETASE FAMILY PROTEIN (CEFD1), PUTATIVE (AFU_ORTHOLOGUE AFUA_6G03630)-RELATED"/>
    <property type="match status" value="1"/>
</dbReference>
<dbReference type="PANTHER" id="PTHR43107">
    <property type="entry name" value="LONG-CHAIN FATTY ACID TRANSPORT PROTEIN"/>
    <property type="match status" value="1"/>
</dbReference>
<dbReference type="Pfam" id="PF00501">
    <property type="entry name" value="AMP-binding"/>
    <property type="match status" value="2"/>
</dbReference>
<dbReference type="Pfam" id="PF13193">
    <property type="entry name" value="AMP-binding_C"/>
    <property type="match status" value="1"/>
</dbReference>
<dbReference type="SUPFAM" id="SSF56801">
    <property type="entry name" value="Acetyl-CoA synthetase-like"/>
    <property type="match status" value="1"/>
</dbReference>
<feature type="chain" id="PRO_0000418513" description="Isopenicillin N epimerase component 1">
    <location>
        <begin position="1"/>
        <end position="609"/>
    </location>
</feature>
<feature type="region of interest" description="Disordered" evidence="2">
    <location>
        <begin position="545"/>
        <end position="570"/>
    </location>
</feature>
<feature type="binding site" evidence="1">
    <location>
        <begin position="185"/>
        <end position="196"/>
    </location>
    <ligand>
        <name>AMP</name>
        <dbReference type="ChEBI" id="CHEBI:456215"/>
    </ligand>
</feature>
<protein>
    <recommendedName>
        <fullName>Isopenicillin N epimerase component 1</fullName>
        <shortName>IPN epimerase component 1</shortName>
        <ecNumber>5.1.1.17</ecNumber>
    </recommendedName>
    <alternativeName>
        <fullName>Isopenicillin N epimerase acyl-CoA synthase component</fullName>
        <ecNumber>6.2.1.-</ecNumber>
    </alternativeName>
</protein>
<keyword id="KW-0045">Antibiotic biosynthesis</keyword>
<keyword id="KW-0413">Isomerase</keyword>
<keyword id="KW-0436">Ligase</keyword>
<accession>Q8J0E9</accession>